<feature type="chain" id="PRO_0000236966" description="Xylose isomerase">
    <location>
        <begin position="1"/>
        <end position="438"/>
    </location>
</feature>
<feature type="active site" evidence="1">
    <location>
        <position position="100"/>
    </location>
</feature>
<feature type="active site" evidence="1">
    <location>
        <position position="103"/>
    </location>
</feature>
<feature type="binding site" evidence="1">
    <location>
        <position position="231"/>
    </location>
    <ligand>
        <name>Mg(2+)</name>
        <dbReference type="ChEBI" id="CHEBI:18420"/>
        <label>1</label>
    </ligand>
</feature>
<feature type="binding site" evidence="1">
    <location>
        <position position="267"/>
    </location>
    <ligand>
        <name>Mg(2+)</name>
        <dbReference type="ChEBI" id="CHEBI:18420"/>
        <label>1</label>
    </ligand>
</feature>
<feature type="binding site" evidence="1">
    <location>
        <position position="267"/>
    </location>
    <ligand>
        <name>Mg(2+)</name>
        <dbReference type="ChEBI" id="CHEBI:18420"/>
        <label>2</label>
    </ligand>
</feature>
<feature type="binding site" evidence="1">
    <location>
        <position position="270"/>
    </location>
    <ligand>
        <name>Mg(2+)</name>
        <dbReference type="ChEBI" id="CHEBI:18420"/>
        <label>2</label>
    </ligand>
</feature>
<feature type="binding site" evidence="1">
    <location>
        <position position="295"/>
    </location>
    <ligand>
        <name>Mg(2+)</name>
        <dbReference type="ChEBI" id="CHEBI:18420"/>
        <label>1</label>
    </ligand>
</feature>
<feature type="binding site" evidence="1">
    <location>
        <position position="306"/>
    </location>
    <ligand>
        <name>Mg(2+)</name>
        <dbReference type="ChEBI" id="CHEBI:18420"/>
        <label>2</label>
    </ligand>
</feature>
<feature type="binding site" evidence="1">
    <location>
        <position position="308"/>
    </location>
    <ligand>
        <name>Mg(2+)</name>
        <dbReference type="ChEBI" id="CHEBI:18420"/>
        <label>2</label>
    </ligand>
</feature>
<feature type="binding site" evidence="1">
    <location>
        <position position="338"/>
    </location>
    <ligand>
        <name>Mg(2+)</name>
        <dbReference type="ChEBI" id="CHEBI:18420"/>
        <label>1</label>
    </ligand>
</feature>
<reference key="1">
    <citation type="journal article" date="2009" name="Genome Biol.">
        <title>Genomic and genetic analyses of diversity and plant interactions of Pseudomonas fluorescens.</title>
        <authorList>
            <person name="Silby M.W."/>
            <person name="Cerdeno-Tarraga A.M."/>
            <person name="Vernikos G.S."/>
            <person name="Giddens S.R."/>
            <person name="Jackson R.W."/>
            <person name="Preston G.M."/>
            <person name="Zhang X.-X."/>
            <person name="Moon C.D."/>
            <person name="Gehrig S.M."/>
            <person name="Godfrey S.A.C."/>
            <person name="Knight C.G."/>
            <person name="Malone J.G."/>
            <person name="Robinson Z."/>
            <person name="Spiers A.J."/>
            <person name="Harris S."/>
            <person name="Challis G.L."/>
            <person name="Yaxley A.M."/>
            <person name="Harris D."/>
            <person name="Seeger K."/>
            <person name="Murphy L."/>
            <person name="Rutter S."/>
            <person name="Squares R."/>
            <person name="Quail M.A."/>
            <person name="Saunders E."/>
            <person name="Mavromatis K."/>
            <person name="Brettin T.S."/>
            <person name="Bentley S.D."/>
            <person name="Hothersall J."/>
            <person name="Stephens E."/>
            <person name="Thomas C.M."/>
            <person name="Parkhill J."/>
            <person name="Levy S.B."/>
            <person name="Rainey P.B."/>
            <person name="Thomson N.R."/>
        </authorList>
    </citation>
    <scope>NUCLEOTIDE SEQUENCE [LARGE SCALE GENOMIC DNA]</scope>
    <source>
        <strain>Pf0-1</strain>
    </source>
</reference>
<sequence length="438" mass="49447">MPYFPDIERIRYEGPASDSPLAFRHYDADKIILGKPMREHLRMAACYWHTFVWPGSDVFGAGTFKRPWQHAGDPMELAIGKAQAAFEFFSKLGIDYYCFHDTDVAPEGNSLKEYRNHFAQMIDHLERHQEESGIKLLWGTANCFSNPRFAAGAASNPDPEVFACAAAQVFSAMNATQRLKGANYVLWGGREGYETLLNTDLKREREQLGRFMRMVVEHKYKIGFKGDLLIEPKPQEPTKHQYDYDSATVFGFLQQFGLEKEIKVNIEANHATLAGHSFHHEVATAVSLGIFGSIDANRGDPQNGWDTDQFPNSVEEMTLVTYEILKAGGFGNGGFNFDSKVRRQSLDETDLFHGHVGAMDVLALSLERAAAMVQNDQLQRLKDQRYAGWQQPFGQSVLAGDFNLQSLAEHAFANELNPQAVSGRQEMLENVVNRFIYR</sequence>
<gene>
    <name evidence="1" type="primary">xylA</name>
    <name type="ordered locus">Pfl01_2303</name>
</gene>
<comment type="catalytic activity">
    <reaction evidence="1">
        <text>alpha-D-xylose = alpha-D-xylulofuranose</text>
        <dbReference type="Rhea" id="RHEA:22816"/>
        <dbReference type="ChEBI" id="CHEBI:28518"/>
        <dbReference type="ChEBI" id="CHEBI:188998"/>
        <dbReference type="EC" id="5.3.1.5"/>
    </reaction>
</comment>
<comment type="cofactor">
    <cofactor evidence="1">
        <name>Mg(2+)</name>
        <dbReference type="ChEBI" id="CHEBI:18420"/>
    </cofactor>
    <text evidence="1">Binds 2 magnesium ions per subunit.</text>
</comment>
<comment type="subunit">
    <text evidence="1">Homotetramer.</text>
</comment>
<comment type="subcellular location">
    <subcellularLocation>
        <location evidence="1">Cytoplasm</location>
    </subcellularLocation>
</comment>
<comment type="similarity">
    <text evidence="1">Belongs to the xylose isomerase family.</text>
</comment>
<keyword id="KW-0119">Carbohydrate metabolism</keyword>
<keyword id="KW-0963">Cytoplasm</keyword>
<keyword id="KW-0413">Isomerase</keyword>
<keyword id="KW-0460">Magnesium</keyword>
<keyword id="KW-0479">Metal-binding</keyword>
<keyword id="KW-0859">Xylose metabolism</keyword>
<name>XYLA_PSEPF</name>
<protein>
    <recommendedName>
        <fullName evidence="1">Xylose isomerase</fullName>
        <ecNumber evidence="1">5.3.1.5</ecNumber>
    </recommendedName>
</protein>
<organism>
    <name type="scientific">Pseudomonas fluorescens (strain Pf0-1)</name>
    <dbReference type="NCBI Taxonomy" id="205922"/>
    <lineage>
        <taxon>Bacteria</taxon>
        <taxon>Pseudomonadati</taxon>
        <taxon>Pseudomonadota</taxon>
        <taxon>Gammaproteobacteria</taxon>
        <taxon>Pseudomonadales</taxon>
        <taxon>Pseudomonadaceae</taxon>
        <taxon>Pseudomonas</taxon>
    </lineage>
</organism>
<evidence type="ECO:0000255" key="1">
    <source>
        <dbReference type="HAMAP-Rule" id="MF_00455"/>
    </source>
</evidence>
<dbReference type="EC" id="5.3.1.5" evidence="1"/>
<dbReference type="EMBL" id="CP000094">
    <property type="protein sequence ID" value="ABA74046.1"/>
    <property type="molecule type" value="Genomic_DNA"/>
</dbReference>
<dbReference type="RefSeq" id="WP_011333729.1">
    <property type="nucleotide sequence ID" value="NC_007492.2"/>
</dbReference>
<dbReference type="SMR" id="Q3KDW0"/>
<dbReference type="KEGG" id="pfo:Pfl01_2303"/>
<dbReference type="eggNOG" id="COG2115">
    <property type="taxonomic scope" value="Bacteria"/>
</dbReference>
<dbReference type="HOGENOM" id="CLU_037261_1_0_6"/>
<dbReference type="Proteomes" id="UP000002704">
    <property type="component" value="Chromosome"/>
</dbReference>
<dbReference type="GO" id="GO:0005737">
    <property type="term" value="C:cytoplasm"/>
    <property type="evidence" value="ECO:0007669"/>
    <property type="project" value="UniProtKB-SubCell"/>
</dbReference>
<dbReference type="GO" id="GO:0000287">
    <property type="term" value="F:magnesium ion binding"/>
    <property type="evidence" value="ECO:0007669"/>
    <property type="project" value="UniProtKB-UniRule"/>
</dbReference>
<dbReference type="GO" id="GO:0009045">
    <property type="term" value="F:xylose isomerase activity"/>
    <property type="evidence" value="ECO:0007669"/>
    <property type="project" value="UniProtKB-UniRule"/>
</dbReference>
<dbReference type="GO" id="GO:0042732">
    <property type="term" value="P:D-xylose metabolic process"/>
    <property type="evidence" value="ECO:0007669"/>
    <property type="project" value="UniProtKB-UniRule"/>
</dbReference>
<dbReference type="FunFam" id="3.20.20.150:FF:000002">
    <property type="entry name" value="Xylose isomerase"/>
    <property type="match status" value="1"/>
</dbReference>
<dbReference type="Gene3D" id="3.20.20.150">
    <property type="entry name" value="Divalent-metal-dependent TIM barrel enzymes"/>
    <property type="match status" value="1"/>
</dbReference>
<dbReference type="HAMAP" id="MF_00455">
    <property type="entry name" value="Xylose_isom_A"/>
    <property type="match status" value="1"/>
</dbReference>
<dbReference type="InterPro" id="IPR036237">
    <property type="entry name" value="Xyl_isomerase-like_sf"/>
</dbReference>
<dbReference type="InterPro" id="IPR013452">
    <property type="entry name" value="Xylose_isom_bac"/>
</dbReference>
<dbReference type="InterPro" id="IPR001998">
    <property type="entry name" value="Xylose_isomerase"/>
</dbReference>
<dbReference type="NCBIfam" id="NF003998">
    <property type="entry name" value="PRK05474.1"/>
    <property type="match status" value="1"/>
</dbReference>
<dbReference type="NCBIfam" id="TIGR02630">
    <property type="entry name" value="xylose_isom_A"/>
    <property type="match status" value="1"/>
</dbReference>
<dbReference type="PANTHER" id="PTHR48408">
    <property type="match status" value="1"/>
</dbReference>
<dbReference type="PANTHER" id="PTHR48408:SF1">
    <property type="entry name" value="XYLOSE ISOMERASE"/>
    <property type="match status" value="1"/>
</dbReference>
<dbReference type="PRINTS" id="PR00688">
    <property type="entry name" value="XYLOSISMRASE"/>
</dbReference>
<dbReference type="SUPFAM" id="SSF51658">
    <property type="entry name" value="Xylose isomerase-like"/>
    <property type="match status" value="1"/>
</dbReference>
<dbReference type="PROSITE" id="PS51415">
    <property type="entry name" value="XYLOSE_ISOMERASE"/>
    <property type="match status" value="1"/>
</dbReference>
<proteinExistence type="inferred from homology"/>
<accession>Q3KDW0</accession>